<protein>
    <recommendedName>
        <fullName>SNF1 protein kinase subunit beta-1</fullName>
    </recommendedName>
    <alternativeName>
        <fullName>SNF1-interacting protein 1</fullName>
    </alternativeName>
</protein>
<proteinExistence type="inferred from homology"/>
<reference key="1">
    <citation type="submission" date="2005-03" db="EMBL/GenBank/DDBJ databases">
        <title>Annotation of the Saccharomyces cerevisiae RM11-1a genome.</title>
        <authorList>
            <consortium name="The Broad Institute Genome Sequencing Platform"/>
            <person name="Birren B.W."/>
            <person name="Lander E.S."/>
            <person name="Galagan J.E."/>
            <person name="Nusbaum C."/>
            <person name="Devon K."/>
            <person name="Cuomo C."/>
            <person name="Jaffe D.B."/>
            <person name="Butler J."/>
            <person name="Alvarez P."/>
            <person name="Gnerre S."/>
            <person name="Grabherr M."/>
            <person name="Kleber M."/>
            <person name="Mauceli E.W."/>
            <person name="Brockman W."/>
            <person name="MacCallum I.A."/>
            <person name="Rounsley S."/>
            <person name="Young S.K."/>
            <person name="LaButti K."/>
            <person name="Pushparaj V."/>
            <person name="DeCaprio D."/>
            <person name="Crawford M."/>
            <person name="Koehrsen M."/>
            <person name="Engels R."/>
            <person name="Montgomery P."/>
            <person name="Pearson M."/>
            <person name="Howarth C."/>
            <person name="Larson L."/>
            <person name="Luoma S."/>
            <person name="White J."/>
            <person name="O'Leary S."/>
            <person name="Kodira C.D."/>
            <person name="Zeng Q."/>
            <person name="Yandava C."/>
            <person name="Alvarado L."/>
            <person name="Pratt S."/>
            <person name="Kruglyak L."/>
        </authorList>
    </citation>
    <scope>NUCLEOTIDE SEQUENCE [LARGE SCALE GENOMIC DNA]</scope>
    <source>
        <strain>RM11-1a</strain>
    </source>
</reference>
<keyword id="KW-0963">Cytoplasm</keyword>
<keyword id="KW-0449">Lipoprotein</keyword>
<keyword id="KW-0472">Membrane</keyword>
<keyword id="KW-0519">Myristate</keyword>
<keyword id="KW-0597">Phosphoprotein</keyword>
<keyword id="KW-0926">Vacuole</keyword>
<name>SIP1_YEAS1</name>
<feature type="initiator methionine" description="Removed" evidence="3">
    <location>
        <position position="1"/>
    </location>
</feature>
<feature type="chain" id="PRO_0000377632" description="SNF1 protein kinase subunit beta-1">
    <location>
        <begin position="2"/>
        <end position="815"/>
    </location>
</feature>
<feature type="region of interest" description="Disordered" evidence="4">
    <location>
        <begin position="1"/>
        <end position="88"/>
    </location>
</feature>
<feature type="region of interest" description="Disordered" evidence="4">
    <location>
        <begin position="120"/>
        <end position="146"/>
    </location>
</feature>
<feature type="region of interest" description="Disordered" evidence="4">
    <location>
        <begin position="311"/>
        <end position="335"/>
    </location>
</feature>
<feature type="region of interest" description="Disordered" evidence="4">
    <location>
        <begin position="363"/>
        <end position="389"/>
    </location>
</feature>
<feature type="region of interest" description="Disordered" evidence="4">
    <location>
        <begin position="410"/>
        <end position="444"/>
    </location>
</feature>
<feature type="region of interest" description="Kinase-interacting sequence (KIS); required for interaction with SNF1" evidence="1">
    <location>
        <begin position="473"/>
        <end position="716"/>
    </location>
</feature>
<feature type="region of interest" description="Disordered" evidence="4">
    <location>
        <begin position="581"/>
        <end position="616"/>
    </location>
</feature>
<feature type="region of interest" description="Association with SNF1 kinase complex (ASC) domain; required for interaction with SNF4" evidence="1">
    <location>
        <begin position="724"/>
        <end position="804"/>
    </location>
</feature>
<feature type="compositionally biased region" description="Polar residues" evidence="4">
    <location>
        <begin position="1"/>
        <end position="11"/>
    </location>
</feature>
<feature type="compositionally biased region" description="Basic and acidic residues" evidence="4">
    <location>
        <begin position="12"/>
        <end position="31"/>
    </location>
</feature>
<feature type="compositionally biased region" description="Polar residues" evidence="4">
    <location>
        <begin position="32"/>
        <end position="42"/>
    </location>
</feature>
<feature type="compositionally biased region" description="Basic and acidic residues" evidence="4">
    <location>
        <begin position="72"/>
        <end position="88"/>
    </location>
</feature>
<feature type="compositionally biased region" description="Basic and acidic residues" evidence="4">
    <location>
        <begin position="120"/>
        <end position="129"/>
    </location>
</feature>
<feature type="compositionally biased region" description="Low complexity" evidence="4">
    <location>
        <begin position="313"/>
        <end position="326"/>
    </location>
</feature>
<feature type="compositionally biased region" description="Basic residues" evidence="4">
    <location>
        <begin position="363"/>
        <end position="376"/>
    </location>
</feature>
<feature type="compositionally biased region" description="Low complexity" evidence="4">
    <location>
        <begin position="377"/>
        <end position="389"/>
    </location>
</feature>
<feature type="compositionally biased region" description="Low complexity" evidence="4">
    <location>
        <begin position="433"/>
        <end position="444"/>
    </location>
</feature>
<feature type="compositionally biased region" description="Basic and acidic residues" evidence="4">
    <location>
        <begin position="587"/>
        <end position="596"/>
    </location>
</feature>
<feature type="compositionally biased region" description="Low complexity" evidence="4">
    <location>
        <begin position="599"/>
        <end position="608"/>
    </location>
</feature>
<feature type="modified residue" description="Phosphoserine" evidence="2">
    <location>
        <position position="33"/>
    </location>
</feature>
<feature type="modified residue" description="Phosphoserine" evidence="2">
    <location>
        <position position="181"/>
    </location>
</feature>
<feature type="modified residue" description="Phosphoserine" evidence="2">
    <location>
        <position position="198"/>
    </location>
</feature>
<feature type="modified residue" description="Phosphoserine" evidence="2">
    <location>
        <position position="200"/>
    </location>
</feature>
<feature type="modified residue" description="Phosphoserine" evidence="2">
    <location>
        <position position="206"/>
    </location>
</feature>
<feature type="modified residue" description="Phosphoserine" evidence="2">
    <location>
        <position position="209"/>
    </location>
</feature>
<feature type="modified residue" description="Phosphoserine" evidence="2">
    <location>
        <position position="220"/>
    </location>
</feature>
<feature type="modified residue" description="Phosphoserine" evidence="2">
    <location>
        <position position="331"/>
    </location>
</feature>
<feature type="modified residue" description="Phosphoserine" evidence="2">
    <location>
        <position position="494"/>
    </location>
</feature>
<feature type="modified residue" description="Phosphoserine" evidence="2">
    <location>
        <position position="497"/>
    </location>
</feature>
<feature type="modified residue" description="Phosphoserine" evidence="2">
    <location>
        <position position="643"/>
    </location>
</feature>
<feature type="lipid moiety-binding region" description="N-myristoyl glycine" evidence="1">
    <location>
        <position position="2"/>
    </location>
</feature>
<sequence>MGNSPSTQDPSHSTKKEHGHHFHDAFNKDRQGSITSQLFNNRKSTHKRRASHTSEHNGAIPPRMQLLASHDPSTDCDGRMSSDTTIDKGPSHLFKKDYSLSSAADVNDTTLANLTLSDDHDVGAPEEQVKSPSFLSPGPSMATVKRTKSDLDDLSTLNYTMVDETTENERNGKPHHERHRSSIIALKKNLLESSATASPSPTRSSSVHSASLPALTKTDSIDIPVRQPYSKKPSIHAYQYQYLNNDETFSENSQMDKEGNSDSVDAEAGVLQSEDMVLNQSLLQNALKKDMQRLSRVNSSNSMYTAERISHANNNGNIENNTRNKGNAGGSNDDFTAPISATAKMMMKLYGDKTLMERDLNKHHNKTKKAQSKKIRSASNSRRSSFASLHSLQSRKSILTNGLNLQPLHPLHPIINDNESQYSAPQHREISHHSNSMSSMSSISSTNSTENTLVVLKWKDDGTVAATTEVFIVSTDIASALKEQRELTLDENASLDSEKQLNPRIRMVYDDVHKEWFVPDLFLPAGIYRLQFSINGILTHSNFLPTATDSEGNFVNWFEVLPGYHTIEPFRNEADIDSQVEPTLDEELPKRPELKRFPSSSRKSSYYSAKGVERPSTPFSDYRGLSRSSSINMRDSFVRLKASSLDLMAEVKPERLVYSNEIPNLFNIGDGSTISVKGDSDDVHPQEPPSFTHRVVDCNQDDLFATLQQGGNIDAETAEAVFLSRYPVPDLPIYLNSSYLNRILNQSNQNSESHERDEGAINHIIPHVNLNHLLTSSIRDEIISVACTTRYEGKFITQVVYAPCYYKTQKSQISN</sequence>
<organism>
    <name type="scientific">Saccharomyces cerevisiae (strain RM11-1a)</name>
    <name type="common">Baker's yeast</name>
    <dbReference type="NCBI Taxonomy" id="285006"/>
    <lineage>
        <taxon>Eukaryota</taxon>
        <taxon>Fungi</taxon>
        <taxon>Dikarya</taxon>
        <taxon>Ascomycota</taxon>
        <taxon>Saccharomycotina</taxon>
        <taxon>Saccharomycetes</taxon>
        <taxon>Saccharomycetales</taxon>
        <taxon>Saccharomycetaceae</taxon>
        <taxon>Saccharomyces</taxon>
    </lineage>
</organism>
<dbReference type="EMBL" id="CH408043">
    <property type="protein sequence ID" value="EDV07913.1"/>
    <property type="status" value="ALT_INIT"/>
    <property type="molecule type" value="Genomic_DNA"/>
</dbReference>
<dbReference type="HOGENOM" id="CLU_011585_0_0_1"/>
<dbReference type="OrthoDB" id="42001at4893"/>
<dbReference type="Proteomes" id="UP000008335">
    <property type="component" value="Unassembled WGS sequence"/>
</dbReference>
<dbReference type="GO" id="GO:0031588">
    <property type="term" value="C:nucleotide-activated protein kinase complex"/>
    <property type="evidence" value="ECO:0007669"/>
    <property type="project" value="TreeGrafter"/>
</dbReference>
<dbReference type="GO" id="GO:0005634">
    <property type="term" value="C:nucleus"/>
    <property type="evidence" value="ECO:0007669"/>
    <property type="project" value="TreeGrafter"/>
</dbReference>
<dbReference type="GO" id="GO:0005774">
    <property type="term" value="C:vacuolar membrane"/>
    <property type="evidence" value="ECO:0007669"/>
    <property type="project" value="UniProtKB-SubCell"/>
</dbReference>
<dbReference type="GO" id="GO:0019901">
    <property type="term" value="F:protein kinase binding"/>
    <property type="evidence" value="ECO:0007669"/>
    <property type="project" value="TreeGrafter"/>
</dbReference>
<dbReference type="GO" id="GO:0007165">
    <property type="term" value="P:signal transduction"/>
    <property type="evidence" value="ECO:0007669"/>
    <property type="project" value="TreeGrafter"/>
</dbReference>
<dbReference type="CDD" id="cd02859">
    <property type="entry name" value="E_set_AMPKbeta_like_N"/>
    <property type="match status" value="1"/>
</dbReference>
<dbReference type="Gene3D" id="6.20.250.60">
    <property type="match status" value="1"/>
</dbReference>
<dbReference type="Gene3D" id="2.60.40.10">
    <property type="entry name" value="Immunoglobulins"/>
    <property type="match status" value="1"/>
</dbReference>
<dbReference type="InterPro" id="IPR032640">
    <property type="entry name" value="AMPK1_CBM"/>
</dbReference>
<dbReference type="InterPro" id="IPR006828">
    <property type="entry name" value="ASC_dom"/>
</dbReference>
<dbReference type="InterPro" id="IPR037256">
    <property type="entry name" value="ASC_dom_sf"/>
</dbReference>
<dbReference type="InterPro" id="IPR050827">
    <property type="entry name" value="CRP1_MDG1_kinase"/>
</dbReference>
<dbReference type="InterPro" id="IPR013783">
    <property type="entry name" value="Ig-like_fold"/>
</dbReference>
<dbReference type="InterPro" id="IPR014756">
    <property type="entry name" value="Ig_E-set"/>
</dbReference>
<dbReference type="PANTHER" id="PTHR10343">
    <property type="entry name" value="5'-AMP-ACTIVATED PROTEIN KINASE , BETA SUBUNIT"/>
    <property type="match status" value="1"/>
</dbReference>
<dbReference type="PANTHER" id="PTHR10343:SF87">
    <property type="entry name" value="SNF1 PROTEIN KINASE SUBUNIT BETA-1"/>
    <property type="match status" value="1"/>
</dbReference>
<dbReference type="Pfam" id="PF16561">
    <property type="entry name" value="AMPK1_CBM"/>
    <property type="match status" value="1"/>
</dbReference>
<dbReference type="Pfam" id="PF04739">
    <property type="entry name" value="AMPKBI"/>
    <property type="match status" value="1"/>
</dbReference>
<dbReference type="SMART" id="SM01010">
    <property type="entry name" value="AMPKBI"/>
    <property type="match status" value="1"/>
</dbReference>
<dbReference type="SUPFAM" id="SSF160219">
    <property type="entry name" value="AMPKBI-like"/>
    <property type="match status" value="1"/>
</dbReference>
<dbReference type="SUPFAM" id="SSF81296">
    <property type="entry name" value="E set domains"/>
    <property type="match status" value="1"/>
</dbReference>
<evidence type="ECO:0000250" key="1"/>
<evidence type="ECO:0000250" key="2">
    <source>
        <dbReference type="UniProtKB" id="P32578"/>
    </source>
</evidence>
<evidence type="ECO:0000255" key="3"/>
<evidence type="ECO:0000256" key="4">
    <source>
        <dbReference type="SAM" id="MobiDB-lite"/>
    </source>
</evidence>
<evidence type="ECO:0000305" key="5"/>
<gene>
    <name type="primary">SIP1</name>
    <name type="ORF">SCRG_00112</name>
</gene>
<comment type="function">
    <text evidence="1">Beta subunit of the SNF1 kinase complex, which is required for transcriptional, metabolic, and developmental adaptations in response to glucose limitation. Has a structural role, mediating heterotrimer formation, and a regulatory role, defining carbon source-regulated subcellular location and substrate specificity of the SNF1 kinase complex. Promotes the PKA-regulated relocalization of the SNF1 kinase complex to the vacuolar membrane in response to various types of carbon stress (By similarity).</text>
</comment>
<comment type="subunit">
    <text evidence="1">Component of the SNF1 kinase complex, a heterotrimeric complex composed of the catalytic alpha subunit SNF1, one of the three related beta subunits SIP1, SIP2 or GAL83, and the regulatory gamma subunit SNF4. The beta subunit serves as a bridge between the catalytic and the regulatory subunit. Interacts (via KIS domain) with SNF1. Interacts (via ASC domain) with SNF4 (By similarity).</text>
</comment>
<comment type="subcellular location">
    <subcellularLocation>
        <location evidence="1">Cytoplasm</location>
    </subcellularLocation>
    <subcellularLocation>
        <location evidence="1">Vacuole membrane</location>
        <topology evidence="1">Peripheral membrane protein</topology>
        <orientation evidence="1">Cytoplasmic side</orientation>
    </subcellularLocation>
    <text evidence="1">Resides in the cytosol during growth in glucose and relocalizes to the vacuolar membrane in response to carbon stress.</text>
</comment>
<comment type="PTM">
    <text evidence="1">Phosphorylated by SNF1 in vitro.</text>
</comment>
<comment type="similarity">
    <text evidence="5">Belongs to the 5'-AMP-activated protein kinase beta subunit family.</text>
</comment>
<comment type="sequence caution" evidence="5">
    <conflict type="erroneous initiation">
        <sequence resource="EMBL-CDS" id="EDV07913"/>
    </conflict>
</comment>
<accession>B3LFN4</accession>